<accession>Q9P326</accession>
<accession>Q7RV89</accession>
<evidence type="ECO:0000255" key="1">
    <source>
        <dbReference type="PROSITE-ProRule" id="PRU00227"/>
    </source>
</evidence>
<evidence type="ECO:0000256" key="2">
    <source>
        <dbReference type="SAM" id="MobiDB-lite"/>
    </source>
</evidence>
<evidence type="ECO:0000269" key="3">
    <source>
    </source>
</evidence>
<proteinExistence type="evidence at transcript level"/>
<feature type="chain" id="PRO_0000114967" description="Transcriptional regulatory protein pro1">
    <location>
        <begin position="1"/>
        <end position="696"/>
    </location>
</feature>
<feature type="DNA-binding region" description="Zn(2)-C6 fungal-type" evidence="1">
    <location>
        <begin position="55"/>
        <end position="82"/>
    </location>
</feature>
<feature type="region of interest" description="Disordered" evidence="2">
    <location>
        <begin position="1"/>
        <end position="48"/>
    </location>
</feature>
<feature type="region of interest" description="Disordered" evidence="2">
    <location>
        <begin position="112"/>
        <end position="145"/>
    </location>
</feature>
<feature type="compositionally biased region" description="Low complexity" evidence="2">
    <location>
        <begin position="21"/>
        <end position="40"/>
    </location>
</feature>
<feature type="compositionally biased region" description="Polar residues" evidence="2">
    <location>
        <begin position="118"/>
        <end position="140"/>
    </location>
</feature>
<reference key="1">
    <citation type="journal article" date="2002" name="Fungal Genet. Biol.">
        <title>Functional analysis of the C6 zinc finger gene pro1 involved in fungal sexual development.</title>
        <authorList>
            <person name="Masloff S."/>
            <person name="Jacobsen S."/>
            <person name="Poeggeler S."/>
            <person name="Kueck U."/>
        </authorList>
    </citation>
    <scope>NUCLEOTIDE SEQUENCE [GENOMIC DNA / MRNA]</scope>
    <scope>FUNCTION</scope>
    <source>
        <strain>FGSC 4317</strain>
    </source>
</reference>
<reference key="2">
    <citation type="journal article" date="2003" name="Nature">
        <title>The genome sequence of the filamentous fungus Neurospora crassa.</title>
        <authorList>
            <person name="Galagan J.E."/>
            <person name="Calvo S.E."/>
            <person name="Borkovich K.A."/>
            <person name="Selker E.U."/>
            <person name="Read N.D."/>
            <person name="Jaffe D.B."/>
            <person name="FitzHugh W."/>
            <person name="Ma L.-J."/>
            <person name="Smirnov S."/>
            <person name="Purcell S."/>
            <person name="Rehman B."/>
            <person name="Elkins T."/>
            <person name="Engels R."/>
            <person name="Wang S."/>
            <person name="Nielsen C.B."/>
            <person name="Butler J."/>
            <person name="Endrizzi M."/>
            <person name="Qui D."/>
            <person name="Ianakiev P."/>
            <person name="Bell-Pedersen D."/>
            <person name="Nelson M.A."/>
            <person name="Werner-Washburne M."/>
            <person name="Selitrennikoff C.P."/>
            <person name="Kinsey J.A."/>
            <person name="Braun E.L."/>
            <person name="Zelter A."/>
            <person name="Schulte U."/>
            <person name="Kothe G.O."/>
            <person name="Jedd G."/>
            <person name="Mewes H.-W."/>
            <person name="Staben C."/>
            <person name="Marcotte E."/>
            <person name="Greenberg D."/>
            <person name="Roy A."/>
            <person name="Foley K."/>
            <person name="Naylor J."/>
            <person name="Stange-Thomann N."/>
            <person name="Barrett R."/>
            <person name="Gnerre S."/>
            <person name="Kamal M."/>
            <person name="Kamvysselis M."/>
            <person name="Mauceli E.W."/>
            <person name="Bielke C."/>
            <person name="Rudd S."/>
            <person name="Frishman D."/>
            <person name="Krystofova S."/>
            <person name="Rasmussen C."/>
            <person name="Metzenberg R.L."/>
            <person name="Perkins D.D."/>
            <person name="Kroken S."/>
            <person name="Cogoni C."/>
            <person name="Macino G."/>
            <person name="Catcheside D.E.A."/>
            <person name="Li W."/>
            <person name="Pratt R.J."/>
            <person name="Osmani S.A."/>
            <person name="DeSouza C.P.C."/>
            <person name="Glass N.L."/>
            <person name="Orbach M.J."/>
            <person name="Berglund J.A."/>
            <person name="Voelker R."/>
            <person name="Yarden O."/>
            <person name="Plamann M."/>
            <person name="Seiler S."/>
            <person name="Dunlap J.C."/>
            <person name="Radford A."/>
            <person name="Aramayo R."/>
            <person name="Natvig D.O."/>
            <person name="Alex L.A."/>
            <person name="Mannhaupt G."/>
            <person name="Ebbole D.J."/>
            <person name="Freitag M."/>
            <person name="Paulsen I."/>
            <person name="Sachs M.S."/>
            <person name="Lander E.S."/>
            <person name="Nusbaum C."/>
            <person name="Birren B.W."/>
        </authorList>
    </citation>
    <scope>NUCLEOTIDE SEQUENCE [LARGE SCALE GENOMIC DNA]</scope>
    <source>
        <strain>ATCC 24698 / 74-OR23-1A / CBS 708.71 / DSM 1257 / FGSC 987</strain>
    </source>
</reference>
<protein>
    <recommendedName>
        <fullName>Transcriptional regulatory protein pro1</fullName>
    </recommendedName>
    <alternativeName>
        <fullName>Arrested development protein 1</fullName>
    </alternativeName>
</protein>
<organism>
    <name type="scientific">Neurospora crassa (strain ATCC 24698 / 74-OR23-1A / CBS 708.71 / DSM 1257 / FGSC 987)</name>
    <dbReference type="NCBI Taxonomy" id="367110"/>
    <lineage>
        <taxon>Eukaryota</taxon>
        <taxon>Fungi</taxon>
        <taxon>Dikarya</taxon>
        <taxon>Ascomycota</taxon>
        <taxon>Pezizomycotina</taxon>
        <taxon>Sordariomycetes</taxon>
        <taxon>Sordariomycetidae</taxon>
        <taxon>Sordariales</taxon>
        <taxon>Sordariaceae</taxon>
        <taxon>Neurospora</taxon>
    </lineage>
</organism>
<name>PRO1_NEUCR</name>
<keyword id="KW-0238">DNA-binding</keyword>
<keyword id="KW-0479">Metal-binding</keyword>
<keyword id="KW-0539">Nucleus</keyword>
<keyword id="KW-1185">Reference proteome</keyword>
<keyword id="KW-0804">Transcription</keyword>
<keyword id="KW-0805">Transcription regulation</keyword>
<keyword id="KW-0862">Zinc</keyword>
<sequence>MSTQSPNHHEDITKTSSVNMTTTTTTTKTKAAAKAGTNAAPKQKTQMHRRSRTGCYTCRLRRKKCDEGSPMCTACKHLGLCCEYKRPMWWSNNDARRKQKDEIKMIIKRKKLSEKSSHTIQTSINTPPGLSHSLPTSATFSDPLDRNRSASIDSHFGFNFNSPQHGQDFAAFATPQIHVNGEYMFPPFSPYEIDMKTERQIFINDIPTLRESTVSTFSTYQTPPPPGTILPSFPLEGEWTEQVFSERRESLTEETFNANFFDFACDPAMASSQVAIELDDGDQKLLDHFVQHVLPTIFPILESNQHGSISSELVLPSLANNKGYLHCCLSIAAQHFKSTMGIQNEEIDNDIMRHRYATITWLCEALNRDENHQPILDATLGLIFFQCIVGRPEDTLPDIPWHQHFQAVVSLVQKLDLAGLVSDITKPLAHTPFNMTLTSWIDILGATMLGSSPLFAHTYRNKHLSINNHSLGLRELMGCEDRVMYLISEIACLESLKNQGMDDITLCQHVRGLGDEISNTEVNEGTLVEPYNANGTLSPKQLSKNITAAFRLAARIYLCSLVPGFYPAQPSCMGLVEKLTAVLQLIPSGVNGYDRSLTWVYLIGGSVSVPGSSFRDFFENRVAQLGDVANSGSFGRMTVLLREVWLQYEAILAAAEAAAGTSSLSSETPQQQQQVNAHYVRWREVMQIKGWDYLLI</sequence>
<dbReference type="EMBL" id="AJ238537">
    <property type="protein sequence ID" value="CAB89819.1"/>
    <property type="molecule type" value="mRNA"/>
</dbReference>
<dbReference type="EMBL" id="AJ238440">
    <property type="protein sequence ID" value="CAB89818.1"/>
    <property type="molecule type" value="Genomic_DNA"/>
</dbReference>
<dbReference type="EMBL" id="CM002236">
    <property type="protein sequence ID" value="EAA29240.3"/>
    <property type="molecule type" value="Genomic_DNA"/>
</dbReference>
<dbReference type="RefSeq" id="XP_958476.3">
    <property type="nucleotide sequence ID" value="XM_953383.3"/>
</dbReference>
<dbReference type="SMR" id="Q9P326"/>
<dbReference type="STRING" id="367110.Q9P326"/>
<dbReference type="PaxDb" id="5141-EFNCRP00000007336"/>
<dbReference type="EnsemblFungi" id="EAA29240">
    <property type="protein sequence ID" value="EAA29240"/>
    <property type="gene ID" value="NCU07392"/>
</dbReference>
<dbReference type="GeneID" id="3874628"/>
<dbReference type="KEGG" id="ncr:NCU07392"/>
<dbReference type="VEuPathDB" id="FungiDB:NCU07392"/>
<dbReference type="HOGENOM" id="CLU_011522_0_0_1"/>
<dbReference type="InParanoid" id="Q9P326"/>
<dbReference type="OrthoDB" id="5294180at2759"/>
<dbReference type="Proteomes" id="UP000001805">
    <property type="component" value="Chromosome 1, Linkage Group I"/>
</dbReference>
<dbReference type="GO" id="GO:0005634">
    <property type="term" value="C:nucleus"/>
    <property type="evidence" value="ECO:0007669"/>
    <property type="project" value="UniProtKB-SubCell"/>
</dbReference>
<dbReference type="GO" id="GO:0003677">
    <property type="term" value="F:DNA binding"/>
    <property type="evidence" value="ECO:0007669"/>
    <property type="project" value="UniProtKB-KW"/>
</dbReference>
<dbReference type="GO" id="GO:0000981">
    <property type="term" value="F:DNA-binding transcription factor activity, RNA polymerase II-specific"/>
    <property type="evidence" value="ECO:0007669"/>
    <property type="project" value="InterPro"/>
</dbReference>
<dbReference type="GO" id="GO:0008270">
    <property type="term" value="F:zinc ion binding"/>
    <property type="evidence" value="ECO:0007669"/>
    <property type="project" value="InterPro"/>
</dbReference>
<dbReference type="CDD" id="cd00067">
    <property type="entry name" value="GAL4"/>
    <property type="match status" value="1"/>
</dbReference>
<dbReference type="Gene3D" id="4.10.240.10">
    <property type="entry name" value="Zn(2)-C6 fungal-type DNA-binding domain"/>
    <property type="match status" value="1"/>
</dbReference>
<dbReference type="InterPro" id="IPR021858">
    <property type="entry name" value="Fun_TF"/>
</dbReference>
<dbReference type="InterPro" id="IPR036864">
    <property type="entry name" value="Zn2-C6_fun-type_DNA-bd_sf"/>
</dbReference>
<dbReference type="InterPro" id="IPR001138">
    <property type="entry name" value="Zn2Cys6_DnaBD"/>
</dbReference>
<dbReference type="PANTHER" id="PTHR37534">
    <property type="entry name" value="TRANSCRIPTIONAL ACTIVATOR PROTEIN UGA3"/>
    <property type="match status" value="1"/>
</dbReference>
<dbReference type="PANTHER" id="PTHR37534:SF12">
    <property type="entry name" value="ZN(2)-C6 FUNGAL-TYPE DOMAIN-CONTAINING PROTEIN"/>
    <property type="match status" value="1"/>
</dbReference>
<dbReference type="Pfam" id="PF11951">
    <property type="entry name" value="Fungal_trans_2"/>
    <property type="match status" value="1"/>
</dbReference>
<dbReference type="Pfam" id="PF00172">
    <property type="entry name" value="Zn_clus"/>
    <property type="match status" value="1"/>
</dbReference>
<dbReference type="SMART" id="SM00066">
    <property type="entry name" value="GAL4"/>
    <property type="match status" value="1"/>
</dbReference>
<dbReference type="SUPFAM" id="SSF57701">
    <property type="entry name" value="Zn2/Cys6 DNA-binding domain"/>
    <property type="match status" value="1"/>
</dbReference>
<dbReference type="PROSITE" id="PS00463">
    <property type="entry name" value="ZN2_CY6_FUNGAL_1"/>
    <property type="match status" value="1"/>
</dbReference>
<dbReference type="PROSITE" id="PS50048">
    <property type="entry name" value="ZN2_CY6_FUNGAL_2"/>
    <property type="match status" value="1"/>
</dbReference>
<gene>
    <name type="primary">adv-1</name>
    <name type="synonym">pro1</name>
    <name type="ORF">NCU07392</name>
</gene>
<comment type="function">
    <text evidence="3">May be involved in fruiting body development.</text>
</comment>
<comment type="subcellular location">
    <subcellularLocation>
        <location evidence="1">Nucleus</location>
    </subcellularLocation>
</comment>